<reference key="1">
    <citation type="journal article" date="2003" name="Nucleic Acids Res.">
        <title>What's in the genome of a filamentous fungus? Analysis of the Neurospora genome sequence.</title>
        <authorList>
            <person name="Mannhaupt G."/>
            <person name="Montrone C."/>
            <person name="Haase D."/>
            <person name="Mewes H.-W."/>
            <person name="Aign V."/>
            <person name="Hoheisel J.D."/>
            <person name="Fartmann B."/>
            <person name="Nyakatura G."/>
            <person name="Kempken F."/>
            <person name="Maier J."/>
            <person name="Schulte U."/>
        </authorList>
    </citation>
    <scope>NUCLEOTIDE SEQUENCE [LARGE SCALE GENOMIC DNA]</scope>
    <source>
        <strain>ATCC 24698 / 74-OR23-1A / CBS 708.71 / DSM 1257 / FGSC 987</strain>
    </source>
</reference>
<reference key="2">
    <citation type="journal article" date="2003" name="Nature">
        <title>The genome sequence of the filamentous fungus Neurospora crassa.</title>
        <authorList>
            <person name="Galagan J.E."/>
            <person name="Calvo S.E."/>
            <person name="Borkovich K.A."/>
            <person name="Selker E.U."/>
            <person name="Read N.D."/>
            <person name="Jaffe D.B."/>
            <person name="FitzHugh W."/>
            <person name="Ma L.-J."/>
            <person name="Smirnov S."/>
            <person name="Purcell S."/>
            <person name="Rehman B."/>
            <person name="Elkins T."/>
            <person name="Engels R."/>
            <person name="Wang S."/>
            <person name="Nielsen C.B."/>
            <person name="Butler J."/>
            <person name="Endrizzi M."/>
            <person name="Qui D."/>
            <person name="Ianakiev P."/>
            <person name="Bell-Pedersen D."/>
            <person name="Nelson M.A."/>
            <person name="Werner-Washburne M."/>
            <person name="Selitrennikoff C.P."/>
            <person name="Kinsey J.A."/>
            <person name="Braun E.L."/>
            <person name="Zelter A."/>
            <person name="Schulte U."/>
            <person name="Kothe G.O."/>
            <person name="Jedd G."/>
            <person name="Mewes H.-W."/>
            <person name="Staben C."/>
            <person name="Marcotte E."/>
            <person name="Greenberg D."/>
            <person name="Roy A."/>
            <person name="Foley K."/>
            <person name="Naylor J."/>
            <person name="Stange-Thomann N."/>
            <person name="Barrett R."/>
            <person name="Gnerre S."/>
            <person name="Kamal M."/>
            <person name="Kamvysselis M."/>
            <person name="Mauceli E.W."/>
            <person name="Bielke C."/>
            <person name="Rudd S."/>
            <person name="Frishman D."/>
            <person name="Krystofova S."/>
            <person name="Rasmussen C."/>
            <person name="Metzenberg R.L."/>
            <person name="Perkins D.D."/>
            <person name="Kroken S."/>
            <person name="Cogoni C."/>
            <person name="Macino G."/>
            <person name="Catcheside D.E.A."/>
            <person name="Li W."/>
            <person name="Pratt R.J."/>
            <person name="Osmani S.A."/>
            <person name="DeSouza C.P.C."/>
            <person name="Glass N.L."/>
            <person name="Orbach M.J."/>
            <person name="Berglund J.A."/>
            <person name="Voelker R."/>
            <person name="Yarden O."/>
            <person name="Plamann M."/>
            <person name="Seiler S."/>
            <person name="Dunlap J.C."/>
            <person name="Radford A."/>
            <person name="Aramayo R."/>
            <person name="Natvig D.O."/>
            <person name="Alex L.A."/>
            <person name="Mannhaupt G."/>
            <person name="Ebbole D.J."/>
            <person name="Freitag M."/>
            <person name="Paulsen I."/>
            <person name="Sachs M.S."/>
            <person name="Lander E.S."/>
            <person name="Nusbaum C."/>
            <person name="Birren B.W."/>
        </authorList>
    </citation>
    <scope>NUCLEOTIDE SEQUENCE [LARGE SCALE GENOMIC DNA]</scope>
    <source>
        <strain>ATCC 24698 / 74-OR23-1A / CBS 708.71 / DSM 1257 / FGSC 987</strain>
    </source>
</reference>
<keyword id="KW-0931">ER-Golgi transport</keyword>
<keyword id="KW-0472">Membrane</keyword>
<keyword id="KW-0653">Protein transport</keyword>
<keyword id="KW-1185">Reference proteome</keyword>
<keyword id="KW-0813">Transport</keyword>
<proteinExistence type="inferred from homology"/>
<name>SEC17_NEUCR</name>
<gene>
    <name type="ORF">B1D1.150</name>
    <name type="ORF">NCU01674</name>
</gene>
<feature type="chain" id="PRO_0000219073" description="Probable vesicular-fusion protein sec17 homolog">
    <location>
        <begin position="1"/>
        <end position="292"/>
    </location>
</feature>
<protein>
    <recommendedName>
        <fullName>Probable vesicular-fusion protein sec17 homolog</fullName>
    </recommendedName>
</protein>
<sequence length="292" mass="32805">MAVDPRVLQQEAEKTLASASKGWGLFGNKEDKYQNAADQYIQAANAFRLQKSNTEAGKCFEEAAKIFTEKLKEPNDAANAMLDAFKVYRKDAPDNAVRCVEVAIKQYTMAGNFRRAASHKENQAEVYENELQNKPEAIKAYTTAAEWYENDGAVALANKLWLKVADLSALAGDFFAAIEKFEKVAEASLGNNLMRYSVKEYFLKAGLCSLATKDMVTAQRNITKYAEKDPSFTGQREYQLLVDLLEAASNNNLEMFQDKLAAYDKMSRLDDWKAAVLLQIKNNFEEADNEFS</sequence>
<organism>
    <name type="scientific">Neurospora crassa (strain ATCC 24698 / 74-OR23-1A / CBS 708.71 / DSM 1257 / FGSC 987)</name>
    <dbReference type="NCBI Taxonomy" id="367110"/>
    <lineage>
        <taxon>Eukaryota</taxon>
        <taxon>Fungi</taxon>
        <taxon>Dikarya</taxon>
        <taxon>Ascomycota</taxon>
        <taxon>Pezizomycotina</taxon>
        <taxon>Sordariomycetes</taxon>
        <taxon>Sordariomycetidae</taxon>
        <taxon>Sordariales</taxon>
        <taxon>Sordariaceae</taxon>
        <taxon>Neurospora</taxon>
    </lineage>
</organism>
<comment type="function">
    <text evidence="1">Required for vesicular transport between the endoplasmic reticulum and the Golgi apparatus.</text>
</comment>
<comment type="subcellular location">
    <subcellularLocation>
        <location evidence="1">Membrane</location>
        <topology evidence="1">Peripheral membrane protein</topology>
    </subcellularLocation>
</comment>
<comment type="similarity">
    <text evidence="2">Belongs to the SNAP family.</text>
</comment>
<dbReference type="EMBL" id="AL355927">
    <property type="protein sequence ID" value="CAB91264.1"/>
    <property type="molecule type" value="Genomic_DNA"/>
</dbReference>
<dbReference type="EMBL" id="CM002237">
    <property type="protein sequence ID" value="EAA27644.2"/>
    <property type="molecule type" value="Genomic_DNA"/>
</dbReference>
<dbReference type="PIR" id="T49361">
    <property type="entry name" value="T49361"/>
</dbReference>
<dbReference type="RefSeq" id="XP_956880.2">
    <property type="nucleotide sequence ID" value="XM_951787.3"/>
</dbReference>
<dbReference type="SMR" id="Q9P6A5"/>
<dbReference type="FunCoup" id="Q9P6A5">
    <property type="interactions" value="889"/>
</dbReference>
<dbReference type="STRING" id="367110.Q9P6A5"/>
<dbReference type="PaxDb" id="5141-EFNCRP00000001724"/>
<dbReference type="EnsemblFungi" id="EAA27644">
    <property type="protein sequence ID" value="EAA27644"/>
    <property type="gene ID" value="NCU01674"/>
</dbReference>
<dbReference type="GeneID" id="3873042"/>
<dbReference type="KEGG" id="ncr:NCU01674"/>
<dbReference type="VEuPathDB" id="FungiDB:NCU01674"/>
<dbReference type="HOGENOM" id="CLU_046329_1_0_1"/>
<dbReference type="InParanoid" id="Q9P6A5"/>
<dbReference type="OrthoDB" id="9984275at2759"/>
<dbReference type="Proteomes" id="UP000001805">
    <property type="component" value="Chromosome 6, Linkage Group II"/>
</dbReference>
<dbReference type="GO" id="GO:0005829">
    <property type="term" value="C:cytosol"/>
    <property type="evidence" value="ECO:0007669"/>
    <property type="project" value="EnsemblFungi"/>
</dbReference>
<dbReference type="GO" id="GO:0031201">
    <property type="term" value="C:SNARE complex"/>
    <property type="evidence" value="ECO:0000318"/>
    <property type="project" value="GO_Central"/>
</dbReference>
<dbReference type="GO" id="GO:0001671">
    <property type="term" value="F:ATPase activator activity"/>
    <property type="evidence" value="ECO:0007669"/>
    <property type="project" value="EnsemblFungi"/>
</dbReference>
<dbReference type="GO" id="GO:0005483">
    <property type="term" value="F:soluble NSF attachment protein activity"/>
    <property type="evidence" value="ECO:0000318"/>
    <property type="project" value="GO_Central"/>
</dbReference>
<dbReference type="GO" id="GO:0019905">
    <property type="term" value="F:syntaxin binding"/>
    <property type="evidence" value="ECO:0000318"/>
    <property type="project" value="GO_Central"/>
</dbReference>
<dbReference type="GO" id="GO:0006914">
    <property type="term" value="P:autophagy"/>
    <property type="evidence" value="ECO:0007669"/>
    <property type="project" value="EnsemblFungi"/>
</dbReference>
<dbReference type="GO" id="GO:0006886">
    <property type="term" value="P:intracellular protein transport"/>
    <property type="evidence" value="ECO:0000318"/>
    <property type="project" value="GO_Central"/>
</dbReference>
<dbReference type="GO" id="GO:0035494">
    <property type="term" value="P:SNARE complex disassembly"/>
    <property type="evidence" value="ECO:0000318"/>
    <property type="project" value="GO_Central"/>
</dbReference>
<dbReference type="GO" id="GO:0042144">
    <property type="term" value="P:vacuole fusion, non-autophagic"/>
    <property type="evidence" value="ECO:0007669"/>
    <property type="project" value="EnsemblFungi"/>
</dbReference>
<dbReference type="GO" id="GO:0048280">
    <property type="term" value="P:vesicle fusion with Golgi apparatus"/>
    <property type="evidence" value="ECO:0007669"/>
    <property type="project" value="EnsemblFungi"/>
</dbReference>
<dbReference type="CDD" id="cd15832">
    <property type="entry name" value="SNAP"/>
    <property type="match status" value="1"/>
</dbReference>
<dbReference type="FunFam" id="1.25.40.10:FF:000049">
    <property type="entry name" value="Alpha-soluble NSF attachment protein-like"/>
    <property type="match status" value="1"/>
</dbReference>
<dbReference type="Gene3D" id="1.25.40.10">
    <property type="entry name" value="Tetratricopeptide repeat domain"/>
    <property type="match status" value="1"/>
</dbReference>
<dbReference type="InterPro" id="IPR000744">
    <property type="entry name" value="NSF_attach"/>
</dbReference>
<dbReference type="InterPro" id="IPR011990">
    <property type="entry name" value="TPR-like_helical_dom_sf"/>
</dbReference>
<dbReference type="PANTHER" id="PTHR13768:SF8">
    <property type="entry name" value="ALPHA-SOLUBLE NSF ATTACHMENT PROTEIN"/>
    <property type="match status" value="1"/>
</dbReference>
<dbReference type="PANTHER" id="PTHR13768">
    <property type="entry name" value="SOLUBLE NSF ATTACHMENT PROTEIN SNAP"/>
    <property type="match status" value="1"/>
</dbReference>
<dbReference type="Pfam" id="PF14938">
    <property type="entry name" value="SNAP"/>
    <property type="match status" value="1"/>
</dbReference>
<dbReference type="PRINTS" id="PR00448">
    <property type="entry name" value="NSFATTACHMNT"/>
</dbReference>
<dbReference type="SUPFAM" id="SSF48452">
    <property type="entry name" value="TPR-like"/>
    <property type="match status" value="1"/>
</dbReference>
<accession>Q9P6A5</accession>
<accession>Q7RY28</accession>
<evidence type="ECO:0000250" key="1"/>
<evidence type="ECO:0000305" key="2"/>